<name>XYLA_CERS4</name>
<feature type="chain" id="PRO_0000236969" description="Xylose isomerase">
    <location>
        <begin position="1"/>
        <end position="433"/>
    </location>
</feature>
<feature type="active site" evidence="1">
    <location>
        <position position="99"/>
    </location>
</feature>
<feature type="active site" evidence="1">
    <location>
        <position position="102"/>
    </location>
</feature>
<feature type="binding site" evidence="1">
    <location>
        <position position="230"/>
    </location>
    <ligand>
        <name>Mg(2+)</name>
        <dbReference type="ChEBI" id="CHEBI:18420"/>
        <label>1</label>
    </ligand>
</feature>
<feature type="binding site" evidence="1">
    <location>
        <position position="266"/>
    </location>
    <ligand>
        <name>Mg(2+)</name>
        <dbReference type="ChEBI" id="CHEBI:18420"/>
        <label>1</label>
    </ligand>
</feature>
<feature type="binding site" evidence="1">
    <location>
        <position position="266"/>
    </location>
    <ligand>
        <name>Mg(2+)</name>
        <dbReference type="ChEBI" id="CHEBI:18420"/>
        <label>2</label>
    </ligand>
</feature>
<feature type="binding site" evidence="1">
    <location>
        <position position="269"/>
    </location>
    <ligand>
        <name>Mg(2+)</name>
        <dbReference type="ChEBI" id="CHEBI:18420"/>
        <label>2</label>
    </ligand>
</feature>
<feature type="binding site" evidence="1">
    <location>
        <position position="294"/>
    </location>
    <ligand>
        <name>Mg(2+)</name>
        <dbReference type="ChEBI" id="CHEBI:18420"/>
        <label>1</label>
    </ligand>
</feature>
<feature type="binding site" evidence="1">
    <location>
        <position position="305"/>
    </location>
    <ligand>
        <name>Mg(2+)</name>
        <dbReference type="ChEBI" id="CHEBI:18420"/>
        <label>2</label>
    </ligand>
</feature>
<feature type="binding site" evidence="1">
    <location>
        <position position="307"/>
    </location>
    <ligand>
        <name>Mg(2+)</name>
        <dbReference type="ChEBI" id="CHEBI:18420"/>
        <label>2</label>
    </ligand>
</feature>
<feature type="binding site" evidence="1">
    <location>
        <position position="337"/>
    </location>
    <ligand>
        <name>Mg(2+)</name>
        <dbReference type="ChEBI" id="CHEBI:18420"/>
        <label>1</label>
    </ligand>
</feature>
<dbReference type="EC" id="5.3.1.5" evidence="1"/>
<dbReference type="EMBL" id="CP000143">
    <property type="protein sequence ID" value="ABA80360.1"/>
    <property type="molecule type" value="Genomic_DNA"/>
</dbReference>
<dbReference type="RefSeq" id="WP_011338767.1">
    <property type="nucleotide sequence ID" value="NC_007493.2"/>
</dbReference>
<dbReference type="RefSeq" id="YP_354261.1">
    <property type="nucleotide sequence ID" value="NC_007493.2"/>
</dbReference>
<dbReference type="SMR" id="Q3IYM4"/>
<dbReference type="STRING" id="272943.RSP_1176"/>
<dbReference type="EnsemblBacteria" id="ABA80360">
    <property type="protein sequence ID" value="ABA80360"/>
    <property type="gene ID" value="RSP_1176"/>
</dbReference>
<dbReference type="GeneID" id="3718169"/>
<dbReference type="KEGG" id="rsp:RSP_1176"/>
<dbReference type="PATRIC" id="fig|272943.9.peg.3155"/>
<dbReference type="eggNOG" id="COG2115">
    <property type="taxonomic scope" value="Bacteria"/>
</dbReference>
<dbReference type="OrthoDB" id="9763981at2"/>
<dbReference type="PhylomeDB" id="Q3IYM4"/>
<dbReference type="Proteomes" id="UP000002703">
    <property type="component" value="Chromosome 1"/>
</dbReference>
<dbReference type="GO" id="GO:0005737">
    <property type="term" value="C:cytoplasm"/>
    <property type="evidence" value="ECO:0007669"/>
    <property type="project" value="UniProtKB-SubCell"/>
</dbReference>
<dbReference type="GO" id="GO:0000287">
    <property type="term" value="F:magnesium ion binding"/>
    <property type="evidence" value="ECO:0007669"/>
    <property type="project" value="UniProtKB-UniRule"/>
</dbReference>
<dbReference type="GO" id="GO:0009045">
    <property type="term" value="F:xylose isomerase activity"/>
    <property type="evidence" value="ECO:0007669"/>
    <property type="project" value="UniProtKB-UniRule"/>
</dbReference>
<dbReference type="GO" id="GO:0042732">
    <property type="term" value="P:D-xylose metabolic process"/>
    <property type="evidence" value="ECO:0007669"/>
    <property type="project" value="UniProtKB-UniRule"/>
</dbReference>
<dbReference type="Gene3D" id="3.20.20.150">
    <property type="entry name" value="Divalent-metal-dependent TIM barrel enzymes"/>
    <property type="match status" value="1"/>
</dbReference>
<dbReference type="HAMAP" id="MF_00455">
    <property type="entry name" value="Xylose_isom_A"/>
    <property type="match status" value="1"/>
</dbReference>
<dbReference type="InterPro" id="IPR036237">
    <property type="entry name" value="Xyl_isomerase-like_sf"/>
</dbReference>
<dbReference type="InterPro" id="IPR013452">
    <property type="entry name" value="Xylose_isom_bac"/>
</dbReference>
<dbReference type="InterPro" id="IPR001998">
    <property type="entry name" value="Xylose_isomerase"/>
</dbReference>
<dbReference type="NCBIfam" id="NF003998">
    <property type="entry name" value="PRK05474.1"/>
    <property type="match status" value="1"/>
</dbReference>
<dbReference type="NCBIfam" id="TIGR02630">
    <property type="entry name" value="xylose_isom_A"/>
    <property type="match status" value="1"/>
</dbReference>
<dbReference type="PANTHER" id="PTHR48408">
    <property type="match status" value="1"/>
</dbReference>
<dbReference type="PANTHER" id="PTHR48408:SF1">
    <property type="entry name" value="XYLOSE ISOMERASE"/>
    <property type="match status" value="1"/>
</dbReference>
<dbReference type="PRINTS" id="PR00688">
    <property type="entry name" value="XYLOSISMRASE"/>
</dbReference>
<dbReference type="SUPFAM" id="SSF51658">
    <property type="entry name" value="Xylose isomerase-like"/>
    <property type="match status" value="1"/>
</dbReference>
<dbReference type="PROSITE" id="PS51415">
    <property type="entry name" value="XYLOSE_ISOMERASE"/>
    <property type="match status" value="1"/>
</dbReference>
<evidence type="ECO:0000255" key="1">
    <source>
        <dbReference type="HAMAP-Rule" id="MF_00455"/>
    </source>
</evidence>
<accession>Q3IYM4</accession>
<gene>
    <name evidence="1" type="primary">xylA</name>
    <name type="ordered locus">RHOS4_27920</name>
    <name type="ORF">RSP_1176</name>
</gene>
<reference key="1">
    <citation type="submission" date="2005-09" db="EMBL/GenBank/DDBJ databases">
        <title>Complete sequence of chromosome 1 of Rhodobacter sphaeroides 2.4.1.</title>
        <authorList>
            <person name="Copeland A."/>
            <person name="Lucas S."/>
            <person name="Lapidus A."/>
            <person name="Barry K."/>
            <person name="Detter J.C."/>
            <person name="Glavina T."/>
            <person name="Hammon N."/>
            <person name="Israni S."/>
            <person name="Pitluck S."/>
            <person name="Richardson P."/>
            <person name="Mackenzie C."/>
            <person name="Choudhary M."/>
            <person name="Larimer F."/>
            <person name="Hauser L.J."/>
            <person name="Land M."/>
            <person name="Donohue T.J."/>
            <person name="Kaplan S."/>
        </authorList>
    </citation>
    <scope>NUCLEOTIDE SEQUENCE [LARGE SCALE GENOMIC DNA]</scope>
    <source>
        <strain>ATCC 17023 / DSM 158 / JCM 6121 / CCUG 31486 / LMG 2827 / NBRC 12203 / NCIMB 8253 / ATH 2.4.1.</strain>
    </source>
</reference>
<organism>
    <name type="scientific">Cereibacter sphaeroides (strain ATCC 17023 / DSM 158 / JCM 6121 / CCUG 31486 / LMG 2827 / NBRC 12203 / NCIMB 8253 / ATH 2.4.1.)</name>
    <name type="common">Rhodobacter sphaeroides</name>
    <dbReference type="NCBI Taxonomy" id="272943"/>
    <lineage>
        <taxon>Bacteria</taxon>
        <taxon>Pseudomonadati</taxon>
        <taxon>Pseudomonadota</taxon>
        <taxon>Alphaproteobacteria</taxon>
        <taxon>Rhodobacterales</taxon>
        <taxon>Paracoccaceae</taxon>
        <taxon>Cereibacter</taxon>
    </lineage>
</organism>
<protein>
    <recommendedName>
        <fullName evidence="1">Xylose isomerase</fullName>
        <ecNumber evidence="1">5.3.1.5</ecNumber>
    </recommendedName>
</protein>
<comment type="catalytic activity">
    <reaction evidence="1">
        <text>alpha-D-xylose = alpha-D-xylulofuranose</text>
        <dbReference type="Rhea" id="RHEA:22816"/>
        <dbReference type="ChEBI" id="CHEBI:28518"/>
        <dbReference type="ChEBI" id="CHEBI:188998"/>
        <dbReference type="EC" id="5.3.1.5"/>
    </reaction>
</comment>
<comment type="cofactor">
    <cofactor evidence="1">
        <name>Mg(2+)</name>
        <dbReference type="ChEBI" id="CHEBI:18420"/>
    </cofactor>
    <text evidence="1">Binds 2 magnesium ions per subunit.</text>
</comment>
<comment type="subunit">
    <text evidence="1">Homotetramer.</text>
</comment>
<comment type="subcellular location">
    <subcellularLocation>
        <location evidence="1">Cytoplasm</location>
    </subcellularLocation>
</comment>
<comment type="similarity">
    <text evidence="1">Belongs to the xylose isomerase family.</text>
</comment>
<keyword id="KW-0119">Carbohydrate metabolism</keyword>
<keyword id="KW-0963">Cytoplasm</keyword>
<keyword id="KW-0413">Isomerase</keyword>
<keyword id="KW-0460">Magnesium</keyword>
<keyword id="KW-0479">Metal-binding</keyword>
<keyword id="KW-1185">Reference proteome</keyword>
<keyword id="KW-0859">Xylose metabolism</keyword>
<sequence length="433" mass="48563">MTDFFAGIPQIRYEGEGSSNEFAFRHYNPDEVILGKRMEDHLRFAVAWWHSFAWPGGDPFGGQTFDRPWFGDTLDLAKLKADVAFEMFDILGAPFFCFHDADIRPEGATFAESKRNLEEIVDHIGIRMEGSKTKLLWGTANLFSHRRFMSGAATNPDPDVFAWSAATVKGCMDATMKLGGANYVLWGGREGYETLLNTDLTREAENAGRFLQMVVDYKHKIGFQGTILIEPKPQEPSKHQYDYDVATVYGFLKRFGLEKEVKLNIEQGHAILAGHSFEHELALAASLGILGSIDMNRNDYQSGWDTDQFPHNHPEMALAYYEILRAGGFTTGGTNFDAKIRRQSLDPEDLVLAHVGGMDTCARALKAAARLYEDGSLETARAARYAGWETPEAQAMLASSLEKIEARVLAEGINPEPRSGRQERLENLWNRFV</sequence>
<proteinExistence type="inferred from homology"/>